<comment type="function">
    <text evidence="2">Paralytic toxin on insects that inhibits voltage-gated sodium (Nav) and calcium (Cav) channels in P.americana (American cockroach) dorsal unpaired median (DUM) neurons, and also inhibits the B.germanica (German cockroach) Nav channel (BgNaV1) (PubMed:28475112). May act as a gating-modifier toxin on Nav and as a pore blocker on Cav (PubMed:28475112). In vivo, reversibly paralyzes both L.cuprina (Australian sheep blowfly) and M.domestica (housefly), but does not affect larvae of H.armigera (cotton bollworms) (PubMed:28475112).</text>
</comment>
<comment type="subcellular location">
    <subcellularLocation>
        <location evidence="2">Secreted</location>
    </subcellularLocation>
</comment>
<comment type="tissue specificity">
    <text evidence="5">Expressed by the venom gland.</text>
</comment>
<comment type="domain">
    <text evidence="1">The presence of a 'disulfide through disulfide knot' structurally defines this protein as a knottin.</text>
</comment>
<comment type="mass spectrometry"/>
<comment type="toxic dose">
    <text evidence="2">PD(50) is 5.6+-0.2 nmol/g when intra-thoracically injected into L.cuprina blowflies (at 30 minutes post-injection).</text>
</comment>
<comment type="toxic dose">
    <text evidence="2">PD(50) is 6.0+-0.2 nmol/g when intra-thoracically injected into L.cuprina blowflies (at 1 hour post-injection).</text>
</comment>
<comment type="toxic dose">
    <text evidence="2">PD(50) is 7.7+-0.5 nmol/g when intra-thoracically injected into L.cuprina blowflies (at 2 hours post-injection).</text>
</comment>
<comment type="miscellaneous">
    <text evidence="2">Possibly exists in two forms, due to cis-trans isomerization of Pro-5 or Pro-22.</text>
</comment>
<comment type="similarity">
    <text evidence="4">Belongs to the neurotoxin 10 (Hwtx-1) family. 28 (Jztx-11) subfamily.</text>
</comment>
<sequence>GVDKPGCRYMFGGCVQDDDCCPHLGCKRKGLYCAWDAS</sequence>
<organism>
    <name type="scientific">Monocentropus balfouri</name>
    <name type="common">Socotra Island blue baboon tarantula</name>
    <dbReference type="NCBI Taxonomy" id="2053173"/>
    <lineage>
        <taxon>Eukaryota</taxon>
        <taxon>Metazoa</taxon>
        <taxon>Ecdysozoa</taxon>
        <taxon>Arthropoda</taxon>
        <taxon>Chelicerata</taxon>
        <taxon>Arachnida</taxon>
        <taxon>Araneae</taxon>
        <taxon>Mygalomorphae</taxon>
        <taxon>Theraphosidae</taxon>
        <taxon>Monocentropus</taxon>
    </lineage>
</organism>
<dbReference type="SMR" id="P0DUC2"/>
<dbReference type="GO" id="GO:0005576">
    <property type="term" value="C:extracellular region"/>
    <property type="evidence" value="ECO:0007669"/>
    <property type="project" value="UniProtKB-SubCell"/>
</dbReference>
<dbReference type="GO" id="GO:0005246">
    <property type="term" value="F:calcium channel regulator activity"/>
    <property type="evidence" value="ECO:0007669"/>
    <property type="project" value="UniProtKB-KW"/>
</dbReference>
<dbReference type="GO" id="GO:0008200">
    <property type="term" value="F:ion channel inhibitor activity"/>
    <property type="evidence" value="ECO:0007669"/>
    <property type="project" value="InterPro"/>
</dbReference>
<dbReference type="GO" id="GO:0017080">
    <property type="term" value="F:sodium channel regulator activity"/>
    <property type="evidence" value="ECO:0007669"/>
    <property type="project" value="UniProtKB-KW"/>
</dbReference>
<dbReference type="GO" id="GO:0090729">
    <property type="term" value="F:toxin activity"/>
    <property type="evidence" value="ECO:0007669"/>
    <property type="project" value="UniProtKB-KW"/>
</dbReference>
<dbReference type="InterPro" id="IPR011696">
    <property type="entry name" value="Huwentoxin-1"/>
</dbReference>
<dbReference type="Pfam" id="PF07740">
    <property type="entry name" value="Toxin_12"/>
    <property type="match status" value="1"/>
</dbReference>
<dbReference type="SUPFAM" id="SSF57059">
    <property type="entry name" value="omega toxin-like"/>
    <property type="match status" value="1"/>
</dbReference>
<accession>P0DUC2</accession>
<feature type="chain" id="PRO_0000451472" description="Mu/omega-theraphotoxin-Mb1b" evidence="2">
    <location>
        <begin position="1"/>
        <end position="38"/>
    </location>
</feature>
<feature type="modified residue" description="Serine amide" evidence="2">
    <location>
        <position position="38"/>
    </location>
</feature>
<feature type="disulfide bond" evidence="1">
    <location>
        <begin position="7"/>
        <end position="21"/>
    </location>
</feature>
<feature type="disulfide bond" evidence="1">
    <location>
        <begin position="14"/>
        <end position="26"/>
    </location>
</feature>
<feature type="disulfide bond" evidence="1">
    <location>
        <begin position="20"/>
        <end position="33"/>
    </location>
</feature>
<keyword id="KW-0027">Amidation</keyword>
<keyword id="KW-0108">Calcium channel impairing toxin</keyword>
<keyword id="KW-0903">Direct protein sequencing</keyword>
<keyword id="KW-1015">Disulfide bond</keyword>
<keyword id="KW-0872">Ion channel impairing toxin</keyword>
<keyword id="KW-0960">Knottin</keyword>
<keyword id="KW-0528">Neurotoxin</keyword>
<keyword id="KW-0964">Secreted</keyword>
<keyword id="KW-0800">Toxin</keyword>
<keyword id="KW-1218">Voltage-gated calcium channel impairing toxin</keyword>
<keyword id="KW-0738">Voltage-gated sodium channel impairing toxin</keyword>
<proteinExistence type="evidence at protein level"/>
<protein>
    <recommendedName>
        <fullName evidence="5">Mu/omega-theraphotoxin-Mb1b</fullName>
        <shortName evidence="3">Mu/omega-TRTX-Mb1b</shortName>
    </recommendedName>
</protein>
<name>TX1B_MONBA</name>
<evidence type="ECO:0000250" key="1">
    <source>
        <dbReference type="UniProtKB" id="P0DM12"/>
    </source>
</evidence>
<evidence type="ECO:0000269" key="2">
    <source>
    </source>
</evidence>
<evidence type="ECO:0000303" key="3">
    <source>
    </source>
</evidence>
<evidence type="ECO:0000305" key="4"/>
<evidence type="ECO:0000305" key="5">
    <source>
    </source>
</evidence>
<reference key="1">
    <citation type="journal article" date="2017" name="Toxins">
        <title>Insect-active toxins with promiscuous pharmacology from the african theraphosid spider Monocentropus balfouri.</title>
        <authorList>
            <person name="Smith J.J."/>
            <person name="Herzig V."/>
            <person name="Ikonomopoulou M.P."/>
            <person name="Dziemborowicz S."/>
            <person name="Bosmans F."/>
            <person name="Nicholson G.M."/>
            <person name="King G.F."/>
        </authorList>
    </citation>
    <scope>PROTEIN SEQUENCE</scope>
    <scope>FUNCTION</scope>
    <scope>AMIDATION AT SER-38</scope>
    <scope>MASS SPECTROMETRY</scope>
    <scope>SUBCELLULAR LOCATION</scope>
    <scope>RECOMBINANT EXPRESSION</scope>
    <scope>TOXIC DOSE</scope>
    <scope>BIOASSAY</scope>
    <source>
        <tissue>Venom</tissue>
    </source>
</reference>